<proteinExistence type="inferred from homology"/>
<sequence>MGTSPFVLPFAALEVGQHLYWQIGKLRIHGQVFMTSWILIGALLTLVVVGTKKMERDPKGVQNLLEFLWDYIRDLARTQIGEKVYRDWMPFIGTLFLFIFVSNWGGALIPWKLIELPSGELGAPTADINTTVALALLVSLSYFYAGLSNKGLRYFEYYVHPTPIMLPFKIVEDFTKPLSLSFRLFGNILADELVVAVLVFLVPLVLPVPVMFLGLFTSAIQALIFATLAAYYIGEAVEEHH</sequence>
<reference key="1">
    <citation type="journal article" date="2003" name="Proc. Natl. Acad. Sci. U.S.A.">
        <title>Genome sequence of the cyanobacterium Prochlorococcus marinus SS120, a nearly minimal oxyphototrophic genome.</title>
        <authorList>
            <person name="Dufresne A."/>
            <person name="Salanoubat M."/>
            <person name="Partensky F."/>
            <person name="Artiguenave F."/>
            <person name="Axmann I.M."/>
            <person name="Barbe V."/>
            <person name="Duprat S."/>
            <person name="Galperin M.Y."/>
            <person name="Koonin E.V."/>
            <person name="Le Gall F."/>
            <person name="Makarova K.S."/>
            <person name="Ostrowski M."/>
            <person name="Oztas S."/>
            <person name="Robert C."/>
            <person name="Rogozin I.B."/>
            <person name="Scanlan D.J."/>
            <person name="Tandeau de Marsac N."/>
            <person name="Weissenbach J."/>
            <person name="Wincker P."/>
            <person name="Wolf Y.I."/>
            <person name="Hess W.R."/>
        </authorList>
    </citation>
    <scope>NUCLEOTIDE SEQUENCE [LARGE SCALE GENOMIC DNA]</scope>
    <source>
        <strain>SARG / CCMP1375 / SS120</strain>
    </source>
</reference>
<protein>
    <recommendedName>
        <fullName evidence="1">ATP synthase subunit a</fullName>
    </recommendedName>
    <alternativeName>
        <fullName evidence="1">ATP synthase F0 sector subunit a</fullName>
    </alternativeName>
    <alternativeName>
        <fullName evidence="1">F-ATPase subunit 6</fullName>
    </alternativeName>
</protein>
<organism>
    <name type="scientific">Prochlorococcus marinus (strain SARG / CCMP1375 / SS120)</name>
    <dbReference type="NCBI Taxonomy" id="167539"/>
    <lineage>
        <taxon>Bacteria</taxon>
        <taxon>Bacillati</taxon>
        <taxon>Cyanobacteriota</taxon>
        <taxon>Cyanophyceae</taxon>
        <taxon>Synechococcales</taxon>
        <taxon>Prochlorococcaceae</taxon>
        <taxon>Prochlorococcus</taxon>
    </lineage>
</organism>
<comment type="function">
    <text evidence="1">Key component of the proton channel; it plays a direct role in the translocation of protons across the membrane.</text>
</comment>
<comment type="subunit">
    <text evidence="1">F-type ATPases have 2 components, CF(1) - the catalytic core - and CF(0) - the membrane proton channel. CF(1) has five subunits: alpha(3), beta(3), gamma(1), delta(1), epsilon(1). CF(0) has four main subunits: a, b, b' and c.</text>
</comment>
<comment type="subcellular location">
    <subcellularLocation>
        <location evidence="1">Cellular thylakoid membrane</location>
        <topology evidence="1">Multi-pass membrane protein</topology>
    </subcellularLocation>
</comment>
<comment type="similarity">
    <text evidence="1">Belongs to the ATPase A chain family.</text>
</comment>
<evidence type="ECO:0000255" key="1">
    <source>
        <dbReference type="HAMAP-Rule" id="MF_01393"/>
    </source>
</evidence>
<gene>
    <name evidence="1" type="primary">atpB</name>
    <name evidence="1" type="synonym">atpI</name>
    <name type="ordered locus">Pro_1609</name>
</gene>
<accession>Q7VA58</accession>
<name>ATP6_PROMA</name>
<keyword id="KW-0066">ATP synthesis</keyword>
<keyword id="KW-0138">CF(0)</keyword>
<keyword id="KW-0375">Hydrogen ion transport</keyword>
<keyword id="KW-0406">Ion transport</keyword>
<keyword id="KW-0472">Membrane</keyword>
<keyword id="KW-1185">Reference proteome</keyword>
<keyword id="KW-0793">Thylakoid</keyword>
<keyword id="KW-0812">Transmembrane</keyword>
<keyword id="KW-1133">Transmembrane helix</keyword>
<keyword id="KW-0813">Transport</keyword>
<dbReference type="EMBL" id="AE017126">
    <property type="protein sequence ID" value="AAQ00653.1"/>
    <property type="molecule type" value="Genomic_DNA"/>
</dbReference>
<dbReference type="RefSeq" id="NP_876000.1">
    <property type="nucleotide sequence ID" value="NC_005042.1"/>
</dbReference>
<dbReference type="RefSeq" id="WP_011125759.1">
    <property type="nucleotide sequence ID" value="NC_005042.1"/>
</dbReference>
<dbReference type="SMR" id="Q7VA58"/>
<dbReference type="STRING" id="167539.Pro_1609"/>
<dbReference type="EnsemblBacteria" id="AAQ00653">
    <property type="protein sequence ID" value="AAQ00653"/>
    <property type="gene ID" value="Pro_1609"/>
</dbReference>
<dbReference type="KEGG" id="pma:Pro_1609"/>
<dbReference type="PATRIC" id="fig|167539.5.peg.1700"/>
<dbReference type="eggNOG" id="COG0356">
    <property type="taxonomic scope" value="Bacteria"/>
</dbReference>
<dbReference type="HOGENOM" id="CLU_041018_2_4_3"/>
<dbReference type="OrthoDB" id="9789241at2"/>
<dbReference type="Proteomes" id="UP000001420">
    <property type="component" value="Chromosome"/>
</dbReference>
<dbReference type="GO" id="GO:0031676">
    <property type="term" value="C:plasma membrane-derived thylakoid membrane"/>
    <property type="evidence" value="ECO:0007669"/>
    <property type="project" value="UniProtKB-SubCell"/>
</dbReference>
<dbReference type="GO" id="GO:0045259">
    <property type="term" value="C:proton-transporting ATP synthase complex"/>
    <property type="evidence" value="ECO:0007669"/>
    <property type="project" value="UniProtKB-KW"/>
</dbReference>
<dbReference type="GO" id="GO:0046933">
    <property type="term" value="F:proton-transporting ATP synthase activity, rotational mechanism"/>
    <property type="evidence" value="ECO:0007669"/>
    <property type="project" value="UniProtKB-UniRule"/>
</dbReference>
<dbReference type="CDD" id="cd00310">
    <property type="entry name" value="ATP-synt_Fo_a_6"/>
    <property type="match status" value="1"/>
</dbReference>
<dbReference type="FunFam" id="1.20.120.220:FF:000001">
    <property type="entry name" value="ATP synthase subunit a, chloroplastic"/>
    <property type="match status" value="1"/>
</dbReference>
<dbReference type="Gene3D" id="1.20.120.220">
    <property type="entry name" value="ATP synthase, F0 complex, subunit A"/>
    <property type="match status" value="1"/>
</dbReference>
<dbReference type="HAMAP" id="MF_01393">
    <property type="entry name" value="ATP_synth_a_bact"/>
    <property type="match status" value="1"/>
</dbReference>
<dbReference type="InterPro" id="IPR045082">
    <property type="entry name" value="ATP_syn_F0_a_bact/chloroplast"/>
</dbReference>
<dbReference type="InterPro" id="IPR000568">
    <property type="entry name" value="ATP_synth_F0_asu"/>
</dbReference>
<dbReference type="InterPro" id="IPR023011">
    <property type="entry name" value="ATP_synth_F0_asu_AS"/>
</dbReference>
<dbReference type="InterPro" id="IPR035908">
    <property type="entry name" value="F0_ATP_A_sf"/>
</dbReference>
<dbReference type="NCBIfam" id="TIGR01131">
    <property type="entry name" value="ATP_synt_6_or_A"/>
    <property type="match status" value="1"/>
</dbReference>
<dbReference type="PANTHER" id="PTHR42823">
    <property type="entry name" value="ATP SYNTHASE SUBUNIT A, CHLOROPLASTIC"/>
    <property type="match status" value="1"/>
</dbReference>
<dbReference type="PANTHER" id="PTHR42823:SF3">
    <property type="entry name" value="ATP SYNTHASE SUBUNIT A, CHLOROPLASTIC"/>
    <property type="match status" value="1"/>
</dbReference>
<dbReference type="Pfam" id="PF00119">
    <property type="entry name" value="ATP-synt_A"/>
    <property type="match status" value="1"/>
</dbReference>
<dbReference type="PRINTS" id="PR00123">
    <property type="entry name" value="ATPASEA"/>
</dbReference>
<dbReference type="SUPFAM" id="SSF81336">
    <property type="entry name" value="F1F0 ATP synthase subunit A"/>
    <property type="match status" value="1"/>
</dbReference>
<dbReference type="PROSITE" id="PS00449">
    <property type="entry name" value="ATPASE_A"/>
    <property type="match status" value="1"/>
</dbReference>
<feature type="chain" id="PRO_0000362374" description="ATP synthase subunit a">
    <location>
        <begin position="1"/>
        <end position="241"/>
    </location>
</feature>
<feature type="transmembrane region" description="Helical" evidence="1">
    <location>
        <begin position="30"/>
        <end position="50"/>
    </location>
</feature>
<feature type="transmembrane region" description="Helical" evidence="1">
    <location>
        <begin position="91"/>
        <end position="111"/>
    </location>
</feature>
<feature type="transmembrane region" description="Helical" evidence="1">
    <location>
        <begin position="128"/>
        <end position="148"/>
    </location>
</feature>
<feature type="transmembrane region" description="Helical" evidence="1">
    <location>
        <begin position="193"/>
        <end position="213"/>
    </location>
</feature>
<feature type="transmembrane region" description="Helical" evidence="1">
    <location>
        <begin position="214"/>
        <end position="234"/>
    </location>
</feature>